<sequence length="154" mass="17176">MPKTDVSGLSQLGTKVDLPQSPEEAVLERVPSGHEGTDFVVRFTAPEFTSLCPMTGQPDFAHIVIDYVPDGWLVESKSLKLFLHSFRNHGAFHEDCTVDIAKRLVSLLSPKWLRIGAYWYPRGGIPIDVFWQTGNPPEGVWLPDQGVPTYRGRG</sequence>
<comment type="function">
    <text evidence="1">Catalyzes the NADPH-dependent reduction of 7-cyano-7-deazaguanine (preQ0) to 7-aminomethyl-7-deazaguanine (preQ1).</text>
</comment>
<comment type="catalytic activity">
    <reaction evidence="1">
        <text>7-aminomethyl-7-carbaguanine + 2 NADP(+) = 7-cyano-7-deazaguanine + 2 NADPH + 3 H(+)</text>
        <dbReference type="Rhea" id="RHEA:13409"/>
        <dbReference type="ChEBI" id="CHEBI:15378"/>
        <dbReference type="ChEBI" id="CHEBI:45075"/>
        <dbReference type="ChEBI" id="CHEBI:57783"/>
        <dbReference type="ChEBI" id="CHEBI:58349"/>
        <dbReference type="ChEBI" id="CHEBI:58703"/>
        <dbReference type="EC" id="1.7.1.13"/>
    </reaction>
</comment>
<comment type="pathway">
    <text evidence="1">tRNA modification; tRNA-queuosine biosynthesis.</text>
</comment>
<comment type="subcellular location">
    <subcellularLocation>
        <location evidence="1">Cytoplasm</location>
    </subcellularLocation>
</comment>
<comment type="similarity">
    <text evidence="1">Belongs to the GTP cyclohydrolase I family. QueF type 1 subfamily.</text>
</comment>
<protein>
    <recommendedName>
        <fullName evidence="1">NADPH-dependent 7-cyano-7-deazaguanine reductase</fullName>
        <ecNumber evidence="1">1.7.1.13</ecNumber>
    </recommendedName>
    <alternativeName>
        <fullName evidence="1">7-cyano-7-carbaguanine reductase</fullName>
    </alternativeName>
    <alternativeName>
        <fullName evidence="1">NADPH-dependent nitrile oxidoreductase</fullName>
    </alternativeName>
    <alternativeName>
        <fullName evidence="1">PreQ(0) reductase</fullName>
    </alternativeName>
</protein>
<name>QUEF_SINFN</name>
<accession>C3MFQ1</accession>
<feature type="chain" id="PRO_1000148675" description="NADPH-dependent 7-cyano-7-deazaguanine reductase">
    <location>
        <begin position="1"/>
        <end position="154"/>
    </location>
</feature>
<feature type="region of interest" description="Disordered" evidence="2">
    <location>
        <begin position="1"/>
        <end position="24"/>
    </location>
</feature>
<feature type="active site" description="Thioimide intermediate" evidence="1">
    <location>
        <position position="52"/>
    </location>
</feature>
<feature type="active site" description="Proton donor" evidence="1">
    <location>
        <position position="59"/>
    </location>
</feature>
<feature type="binding site" evidence="1">
    <location>
        <begin position="74"/>
        <end position="76"/>
    </location>
    <ligand>
        <name>substrate</name>
    </ligand>
</feature>
<feature type="binding site" evidence="1">
    <location>
        <begin position="93"/>
        <end position="94"/>
    </location>
    <ligand>
        <name>substrate</name>
    </ligand>
</feature>
<keyword id="KW-0963">Cytoplasm</keyword>
<keyword id="KW-0521">NADP</keyword>
<keyword id="KW-0560">Oxidoreductase</keyword>
<keyword id="KW-0671">Queuosine biosynthesis</keyword>
<keyword id="KW-1185">Reference proteome</keyword>
<reference key="1">
    <citation type="journal article" date="2009" name="Appl. Environ. Microbiol.">
        <title>Rhizobium sp. strain NGR234 possesses a remarkable number of secretion systems.</title>
        <authorList>
            <person name="Schmeisser C."/>
            <person name="Liesegang H."/>
            <person name="Krysciak D."/>
            <person name="Bakkou N."/>
            <person name="Le Quere A."/>
            <person name="Wollherr A."/>
            <person name="Heinemeyer I."/>
            <person name="Morgenstern B."/>
            <person name="Pommerening-Roeser A."/>
            <person name="Flores M."/>
            <person name="Palacios R."/>
            <person name="Brenner S."/>
            <person name="Gottschalk G."/>
            <person name="Schmitz R.A."/>
            <person name="Broughton W.J."/>
            <person name="Perret X."/>
            <person name="Strittmatter A.W."/>
            <person name="Streit W.R."/>
        </authorList>
    </citation>
    <scope>NUCLEOTIDE SEQUENCE [LARGE SCALE GENOMIC DNA]</scope>
    <source>
        <strain>NBRC 101917 / NGR234</strain>
    </source>
</reference>
<proteinExistence type="inferred from homology"/>
<organism>
    <name type="scientific">Sinorhizobium fredii (strain NBRC 101917 / NGR234)</name>
    <dbReference type="NCBI Taxonomy" id="394"/>
    <lineage>
        <taxon>Bacteria</taxon>
        <taxon>Pseudomonadati</taxon>
        <taxon>Pseudomonadota</taxon>
        <taxon>Alphaproteobacteria</taxon>
        <taxon>Hyphomicrobiales</taxon>
        <taxon>Rhizobiaceae</taxon>
        <taxon>Sinorhizobium/Ensifer group</taxon>
        <taxon>Sinorhizobium</taxon>
    </lineage>
</organism>
<gene>
    <name evidence="1" type="primary">queF</name>
    <name type="ordered locus">NGR_c23490</name>
</gene>
<dbReference type="EC" id="1.7.1.13" evidence="1"/>
<dbReference type="EMBL" id="CP001389">
    <property type="protein sequence ID" value="ACP26108.1"/>
    <property type="molecule type" value="Genomic_DNA"/>
</dbReference>
<dbReference type="RefSeq" id="WP_012708866.1">
    <property type="nucleotide sequence ID" value="NC_012587.1"/>
</dbReference>
<dbReference type="RefSeq" id="YP_002826861.1">
    <property type="nucleotide sequence ID" value="NC_012587.1"/>
</dbReference>
<dbReference type="SMR" id="C3MFQ1"/>
<dbReference type="STRING" id="394.NGR_c23490"/>
<dbReference type="KEGG" id="rhi:NGR_c23490"/>
<dbReference type="PATRIC" id="fig|394.7.peg.5169"/>
<dbReference type="eggNOG" id="COG0780">
    <property type="taxonomic scope" value="Bacteria"/>
</dbReference>
<dbReference type="HOGENOM" id="CLU_102489_0_1_5"/>
<dbReference type="OrthoDB" id="9789995at2"/>
<dbReference type="UniPathway" id="UPA00392"/>
<dbReference type="Proteomes" id="UP000001054">
    <property type="component" value="Chromosome"/>
</dbReference>
<dbReference type="GO" id="GO:0005737">
    <property type="term" value="C:cytoplasm"/>
    <property type="evidence" value="ECO:0007669"/>
    <property type="project" value="UniProtKB-SubCell"/>
</dbReference>
<dbReference type="GO" id="GO:0033739">
    <property type="term" value="F:preQ1 synthase activity"/>
    <property type="evidence" value="ECO:0007669"/>
    <property type="project" value="UniProtKB-UniRule"/>
</dbReference>
<dbReference type="GO" id="GO:0008616">
    <property type="term" value="P:queuosine biosynthetic process"/>
    <property type="evidence" value="ECO:0007669"/>
    <property type="project" value="UniProtKB-UniRule"/>
</dbReference>
<dbReference type="GO" id="GO:0006400">
    <property type="term" value="P:tRNA modification"/>
    <property type="evidence" value="ECO:0007669"/>
    <property type="project" value="UniProtKB-UniRule"/>
</dbReference>
<dbReference type="Gene3D" id="3.30.1130.10">
    <property type="match status" value="1"/>
</dbReference>
<dbReference type="HAMAP" id="MF_00818">
    <property type="entry name" value="QueF_type1"/>
    <property type="match status" value="1"/>
</dbReference>
<dbReference type="InterPro" id="IPR043133">
    <property type="entry name" value="GTP-CH-I_C/QueF"/>
</dbReference>
<dbReference type="InterPro" id="IPR050084">
    <property type="entry name" value="NADPH_dep_7-cyano-7-deazaG_red"/>
</dbReference>
<dbReference type="InterPro" id="IPR029500">
    <property type="entry name" value="QueF"/>
</dbReference>
<dbReference type="InterPro" id="IPR016856">
    <property type="entry name" value="QueF_type1"/>
</dbReference>
<dbReference type="NCBIfam" id="TIGR03139">
    <property type="entry name" value="QueF-II"/>
    <property type="match status" value="1"/>
</dbReference>
<dbReference type="PANTHER" id="PTHR34354">
    <property type="entry name" value="NADPH-DEPENDENT 7-CYANO-7-DEAZAGUANINE REDUCTASE"/>
    <property type="match status" value="1"/>
</dbReference>
<dbReference type="PANTHER" id="PTHR34354:SF1">
    <property type="entry name" value="NADPH-DEPENDENT 7-CYANO-7-DEAZAGUANINE REDUCTASE"/>
    <property type="match status" value="1"/>
</dbReference>
<dbReference type="Pfam" id="PF14489">
    <property type="entry name" value="QueF"/>
    <property type="match status" value="1"/>
</dbReference>
<dbReference type="PIRSF" id="PIRSF027377">
    <property type="entry name" value="Nitrile_oxidored_QueF"/>
    <property type="match status" value="1"/>
</dbReference>
<dbReference type="SUPFAM" id="SSF55620">
    <property type="entry name" value="Tetrahydrobiopterin biosynthesis enzymes-like"/>
    <property type="match status" value="1"/>
</dbReference>
<evidence type="ECO:0000255" key="1">
    <source>
        <dbReference type="HAMAP-Rule" id="MF_00818"/>
    </source>
</evidence>
<evidence type="ECO:0000256" key="2">
    <source>
        <dbReference type="SAM" id="MobiDB-lite"/>
    </source>
</evidence>